<organism>
    <name type="scientific">Paraburkholderia phytofirmans (strain DSM 17436 / LMG 22146 / PsJN)</name>
    <name type="common">Burkholderia phytofirmans</name>
    <dbReference type="NCBI Taxonomy" id="398527"/>
    <lineage>
        <taxon>Bacteria</taxon>
        <taxon>Pseudomonadati</taxon>
        <taxon>Pseudomonadota</taxon>
        <taxon>Betaproteobacteria</taxon>
        <taxon>Burkholderiales</taxon>
        <taxon>Burkholderiaceae</taxon>
        <taxon>Paraburkholderia</taxon>
    </lineage>
</organism>
<name>GCSP_PARPJ</name>
<evidence type="ECO:0000255" key="1">
    <source>
        <dbReference type="HAMAP-Rule" id="MF_00711"/>
    </source>
</evidence>
<sequence>MKLEHPDRLMNRTPLSLAALEVHDAFAERHIGPDAADQHAMLEALGFASRAALIDAVIPKTIRRTETLPLGPFTQPKSEAEALAALRELADKNQVFRSYIGQGYYNAHTPTVILRNVLENPAWYTAYTPYQPEISQGRLEALLNFQQMIVDLTGLAISNASLLDEATAAAEAMTLLQRVGKPKSNVFFVADDVLPQTIEVVRTRATPVGIEVKVGPASEAANANAFGVLLQYPGVNGDVRDYRALTEAIHAAGGHVVVAADLLALTVLTPPGEWGADVAVGNTQRFGVPVGFGGPHAAYLAVRDEFKRQMPGRLVGVTVDAQGNPALRLALQTREQHIRREKATSNVCTAQALLAIMASMYAVYHGPHGLKTIALRVNRIAALLAEGAKQLGYTLANETFFDTLTFDTGARTQALLDAATAKRINLRRVSATQVGLSIDETTTRHDLADLLAVFAQAAFTNDVPQVDALDAKLAASNTASVPAALERTSAYLTHHVFNRHHSETEMLRYLRSLSDKDLALDRSMIPLGSCTMKLNATSEMLPVTWPEFGQIHPFAPAEQTVGYREMIDQLEEMLVAATGYAAVSLQPNAGSQGEYAGLLIIHAYHASRGEAHRNVCLIPASAHGTNPASAQMAGMQVVVVACDAQGNVDIEDLKKKAGQHADKLAAIMITYPSTHGVFEQNVREICEIVHAHGGQVYVDGANMNAMVGLTAPGQFGGDVSHLNLHKTFCIPHGGGGPGVGPVAVGAHLAQFLPNQISSGYERAPNGIGAVSGAPYGSASILPISWMYIAMMGAKNLTAATETAILNANYVAKKLAPHYPVLYSGPGGLVAHECILDLRPIKETSGITVDDVAKRLADYGFHAPTMSFPVPGTLMVEPTESESKEELDRFIEAMIAIREEIRAVEDGRSDREDNPLKHAPHTAAVVIANDWKHAYARETAAYPLPTLIAKKYWPPVGRADNVYGDRNLFCSCVPIADYE</sequence>
<dbReference type="EC" id="1.4.4.2" evidence="1"/>
<dbReference type="EMBL" id="CP001052">
    <property type="protein sequence ID" value="ACD18269.1"/>
    <property type="molecule type" value="Genomic_DNA"/>
</dbReference>
<dbReference type="RefSeq" id="WP_012434789.1">
    <property type="nucleotide sequence ID" value="NC_010681.1"/>
</dbReference>
<dbReference type="SMR" id="B2T7I8"/>
<dbReference type="STRING" id="398527.Bphyt_3882"/>
<dbReference type="KEGG" id="bpy:Bphyt_3882"/>
<dbReference type="eggNOG" id="COG0403">
    <property type="taxonomic scope" value="Bacteria"/>
</dbReference>
<dbReference type="eggNOG" id="COG1003">
    <property type="taxonomic scope" value="Bacteria"/>
</dbReference>
<dbReference type="HOGENOM" id="CLU_004620_1_1_4"/>
<dbReference type="OrthoDB" id="9801272at2"/>
<dbReference type="Proteomes" id="UP000001739">
    <property type="component" value="Chromosome 1"/>
</dbReference>
<dbReference type="GO" id="GO:0005829">
    <property type="term" value="C:cytosol"/>
    <property type="evidence" value="ECO:0007669"/>
    <property type="project" value="TreeGrafter"/>
</dbReference>
<dbReference type="GO" id="GO:0005960">
    <property type="term" value="C:glycine cleavage complex"/>
    <property type="evidence" value="ECO:0007669"/>
    <property type="project" value="TreeGrafter"/>
</dbReference>
<dbReference type="GO" id="GO:0016594">
    <property type="term" value="F:glycine binding"/>
    <property type="evidence" value="ECO:0007669"/>
    <property type="project" value="TreeGrafter"/>
</dbReference>
<dbReference type="GO" id="GO:0004375">
    <property type="term" value="F:glycine dehydrogenase (decarboxylating) activity"/>
    <property type="evidence" value="ECO:0007669"/>
    <property type="project" value="UniProtKB-EC"/>
</dbReference>
<dbReference type="GO" id="GO:0030170">
    <property type="term" value="F:pyridoxal phosphate binding"/>
    <property type="evidence" value="ECO:0007669"/>
    <property type="project" value="TreeGrafter"/>
</dbReference>
<dbReference type="GO" id="GO:0019464">
    <property type="term" value="P:glycine decarboxylation via glycine cleavage system"/>
    <property type="evidence" value="ECO:0007669"/>
    <property type="project" value="UniProtKB-UniRule"/>
</dbReference>
<dbReference type="CDD" id="cd00613">
    <property type="entry name" value="GDC-P"/>
    <property type="match status" value="2"/>
</dbReference>
<dbReference type="FunFam" id="3.40.640.10:FF:000005">
    <property type="entry name" value="Glycine dehydrogenase (decarboxylating), mitochondrial"/>
    <property type="match status" value="1"/>
</dbReference>
<dbReference type="FunFam" id="3.90.1150.10:FF:000007">
    <property type="entry name" value="Glycine dehydrogenase (decarboxylating), mitochondrial"/>
    <property type="match status" value="1"/>
</dbReference>
<dbReference type="FunFam" id="3.40.640.10:FF:000007">
    <property type="entry name" value="glycine dehydrogenase (Decarboxylating), mitochondrial"/>
    <property type="match status" value="1"/>
</dbReference>
<dbReference type="Gene3D" id="3.90.1150.10">
    <property type="entry name" value="Aspartate Aminotransferase, domain 1"/>
    <property type="match status" value="2"/>
</dbReference>
<dbReference type="Gene3D" id="3.40.640.10">
    <property type="entry name" value="Type I PLP-dependent aspartate aminotransferase-like (Major domain)"/>
    <property type="match status" value="2"/>
</dbReference>
<dbReference type="HAMAP" id="MF_00711">
    <property type="entry name" value="GcvP"/>
    <property type="match status" value="1"/>
</dbReference>
<dbReference type="InterPro" id="IPR003437">
    <property type="entry name" value="GcvP"/>
</dbReference>
<dbReference type="InterPro" id="IPR049316">
    <property type="entry name" value="GDC-P_C"/>
</dbReference>
<dbReference type="InterPro" id="IPR049315">
    <property type="entry name" value="GDC-P_N"/>
</dbReference>
<dbReference type="InterPro" id="IPR020581">
    <property type="entry name" value="GDC_P"/>
</dbReference>
<dbReference type="InterPro" id="IPR015424">
    <property type="entry name" value="PyrdxlP-dep_Trfase"/>
</dbReference>
<dbReference type="InterPro" id="IPR015421">
    <property type="entry name" value="PyrdxlP-dep_Trfase_major"/>
</dbReference>
<dbReference type="InterPro" id="IPR015422">
    <property type="entry name" value="PyrdxlP-dep_Trfase_small"/>
</dbReference>
<dbReference type="NCBIfam" id="TIGR00461">
    <property type="entry name" value="gcvP"/>
    <property type="match status" value="1"/>
</dbReference>
<dbReference type="NCBIfam" id="NF003346">
    <property type="entry name" value="PRK04366.1"/>
    <property type="match status" value="1"/>
</dbReference>
<dbReference type="PANTHER" id="PTHR11773:SF1">
    <property type="entry name" value="GLYCINE DEHYDROGENASE (DECARBOXYLATING), MITOCHONDRIAL"/>
    <property type="match status" value="1"/>
</dbReference>
<dbReference type="PANTHER" id="PTHR11773">
    <property type="entry name" value="GLYCINE DEHYDROGENASE, DECARBOXYLATING"/>
    <property type="match status" value="1"/>
</dbReference>
<dbReference type="Pfam" id="PF21478">
    <property type="entry name" value="GcvP2_C"/>
    <property type="match status" value="1"/>
</dbReference>
<dbReference type="Pfam" id="PF02347">
    <property type="entry name" value="GDC-P"/>
    <property type="match status" value="2"/>
</dbReference>
<dbReference type="SUPFAM" id="SSF53383">
    <property type="entry name" value="PLP-dependent transferases"/>
    <property type="match status" value="2"/>
</dbReference>
<keyword id="KW-0560">Oxidoreductase</keyword>
<keyword id="KW-0663">Pyridoxal phosphate</keyword>
<accession>B2T7I8</accession>
<proteinExistence type="inferred from homology"/>
<reference key="1">
    <citation type="journal article" date="2011" name="J. Bacteriol.">
        <title>Complete genome sequence of the plant growth-promoting endophyte Burkholderia phytofirmans strain PsJN.</title>
        <authorList>
            <person name="Weilharter A."/>
            <person name="Mitter B."/>
            <person name="Shin M.V."/>
            <person name="Chain P.S."/>
            <person name="Nowak J."/>
            <person name="Sessitsch A."/>
        </authorList>
    </citation>
    <scope>NUCLEOTIDE SEQUENCE [LARGE SCALE GENOMIC DNA]</scope>
    <source>
        <strain>DSM 17436 / LMG 22146 / PsJN</strain>
    </source>
</reference>
<gene>
    <name evidence="1" type="primary">gcvP</name>
    <name type="ordered locus">Bphyt_3882</name>
</gene>
<comment type="function">
    <text evidence="1">The glycine cleavage system catalyzes the degradation of glycine. The P protein binds the alpha-amino group of glycine through its pyridoxal phosphate cofactor; CO(2) is released and the remaining methylamine moiety is then transferred to the lipoamide cofactor of the H protein.</text>
</comment>
<comment type="catalytic activity">
    <reaction evidence="1">
        <text>N(6)-[(R)-lipoyl]-L-lysyl-[glycine-cleavage complex H protein] + glycine + H(+) = N(6)-[(R)-S(8)-aminomethyldihydrolipoyl]-L-lysyl-[glycine-cleavage complex H protein] + CO2</text>
        <dbReference type="Rhea" id="RHEA:24304"/>
        <dbReference type="Rhea" id="RHEA-COMP:10494"/>
        <dbReference type="Rhea" id="RHEA-COMP:10495"/>
        <dbReference type="ChEBI" id="CHEBI:15378"/>
        <dbReference type="ChEBI" id="CHEBI:16526"/>
        <dbReference type="ChEBI" id="CHEBI:57305"/>
        <dbReference type="ChEBI" id="CHEBI:83099"/>
        <dbReference type="ChEBI" id="CHEBI:83143"/>
        <dbReference type="EC" id="1.4.4.2"/>
    </reaction>
</comment>
<comment type="cofactor">
    <cofactor evidence="1">
        <name>pyridoxal 5'-phosphate</name>
        <dbReference type="ChEBI" id="CHEBI:597326"/>
    </cofactor>
</comment>
<comment type="subunit">
    <text evidence="1">The glycine cleavage system is composed of four proteins: P, T, L and H.</text>
</comment>
<comment type="similarity">
    <text evidence="1">Belongs to the GcvP family.</text>
</comment>
<protein>
    <recommendedName>
        <fullName evidence="1">Glycine dehydrogenase (decarboxylating)</fullName>
        <ecNumber evidence="1">1.4.4.2</ecNumber>
    </recommendedName>
    <alternativeName>
        <fullName evidence="1">Glycine cleavage system P-protein</fullName>
    </alternativeName>
    <alternativeName>
        <fullName evidence="1">Glycine decarboxylase</fullName>
    </alternativeName>
    <alternativeName>
        <fullName evidence="1">Glycine dehydrogenase (aminomethyl-transferring)</fullName>
    </alternativeName>
</protein>
<feature type="chain" id="PRO_1000190211" description="Glycine dehydrogenase (decarboxylating)">
    <location>
        <begin position="1"/>
        <end position="978"/>
    </location>
</feature>
<feature type="modified residue" description="N6-(pyridoxal phosphate)lysine" evidence="1">
    <location>
        <position position="726"/>
    </location>
</feature>